<comment type="function">
    <text evidence="1">Located on the platform of the 30S subunit, it bridges several disparate RNA helices of the 16S rRNA. Forms part of the Shine-Dalgarno cleft in the 70S ribosome.</text>
</comment>
<comment type="subunit">
    <text evidence="1">Part of the 30S ribosomal subunit. Interacts with proteins S7 and S18. Binds to IF-3.</text>
</comment>
<comment type="similarity">
    <text evidence="1">Belongs to the universal ribosomal protein uS11 family.</text>
</comment>
<accession>Q7VKF6</accession>
<keyword id="KW-1185">Reference proteome</keyword>
<keyword id="KW-0687">Ribonucleoprotein</keyword>
<keyword id="KW-0689">Ribosomal protein</keyword>
<keyword id="KW-0694">RNA-binding</keyword>
<keyword id="KW-0699">rRNA-binding</keyword>
<sequence length="129" mass="13843">MAKTPVRARKRVKKQIADGVAHIHASFNNTIVTITDRQGNALAWATAGGSGFRGSRKSTPFAAQVAAERCAEAVKEFGLKNLEVMVKGPGPGRESTIRALNAAGFRITNITDVTPIPHNGCRPPKKRRV</sequence>
<name>RS11_HAEDU</name>
<organism>
    <name type="scientific">Haemophilus ducreyi (strain 35000HP / ATCC 700724)</name>
    <dbReference type="NCBI Taxonomy" id="233412"/>
    <lineage>
        <taxon>Bacteria</taxon>
        <taxon>Pseudomonadati</taxon>
        <taxon>Pseudomonadota</taxon>
        <taxon>Gammaproteobacteria</taxon>
        <taxon>Pasteurellales</taxon>
        <taxon>Pasteurellaceae</taxon>
        <taxon>Haemophilus</taxon>
    </lineage>
</organism>
<protein>
    <recommendedName>
        <fullName evidence="1">Small ribosomal subunit protein uS11</fullName>
    </recommendedName>
    <alternativeName>
        <fullName evidence="2">30S ribosomal protein S11</fullName>
    </alternativeName>
</protein>
<feature type="chain" id="PRO_0000123154" description="Small ribosomal subunit protein uS11">
    <location>
        <begin position="1"/>
        <end position="129"/>
    </location>
</feature>
<evidence type="ECO:0000255" key="1">
    <source>
        <dbReference type="HAMAP-Rule" id="MF_01310"/>
    </source>
</evidence>
<evidence type="ECO:0000305" key="2"/>
<dbReference type="EMBL" id="AE017143">
    <property type="protein sequence ID" value="AAP96673.1"/>
    <property type="molecule type" value="Genomic_DNA"/>
</dbReference>
<dbReference type="RefSeq" id="WP_005599323.1">
    <property type="nucleotide sequence ID" value="NC_002940.2"/>
</dbReference>
<dbReference type="SMR" id="Q7VKF6"/>
<dbReference type="STRING" id="233412.HD_1953"/>
<dbReference type="GeneID" id="92743632"/>
<dbReference type="KEGG" id="hdu:HD_1953"/>
<dbReference type="eggNOG" id="COG0100">
    <property type="taxonomic scope" value="Bacteria"/>
</dbReference>
<dbReference type="HOGENOM" id="CLU_072439_5_0_6"/>
<dbReference type="OrthoDB" id="9806415at2"/>
<dbReference type="Proteomes" id="UP000001022">
    <property type="component" value="Chromosome"/>
</dbReference>
<dbReference type="GO" id="GO:1990904">
    <property type="term" value="C:ribonucleoprotein complex"/>
    <property type="evidence" value="ECO:0007669"/>
    <property type="project" value="UniProtKB-KW"/>
</dbReference>
<dbReference type="GO" id="GO:0005840">
    <property type="term" value="C:ribosome"/>
    <property type="evidence" value="ECO:0007669"/>
    <property type="project" value="UniProtKB-KW"/>
</dbReference>
<dbReference type="GO" id="GO:0019843">
    <property type="term" value="F:rRNA binding"/>
    <property type="evidence" value="ECO:0007669"/>
    <property type="project" value="UniProtKB-UniRule"/>
</dbReference>
<dbReference type="GO" id="GO:0003735">
    <property type="term" value="F:structural constituent of ribosome"/>
    <property type="evidence" value="ECO:0007669"/>
    <property type="project" value="InterPro"/>
</dbReference>
<dbReference type="GO" id="GO:0006412">
    <property type="term" value="P:translation"/>
    <property type="evidence" value="ECO:0007669"/>
    <property type="project" value="UniProtKB-UniRule"/>
</dbReference>
<dbReference type="FunFam" id="3.30.420.80:FF:000001">
    <property type="entry name" value="30S ribosomal protein S11"/>
    <property type="match status" value="1"/>
</dbReference>
<dbReference type="Gene3D" id="3.30.420.80">
    <property type="entry name" value="Ribosomal protein S11"/>
    <property type="match status" value="1"/>
</dbReference>
<dbReference type="HAMAP" id="MF_01310">
    <property type="entry name" value="Ribosomal_uS11"/>
    <property type="match status" value="1"/>
</dbReference>
<dbReference type="InterPro" id="IPR001971">
    <property type="entry name" value="Ribosomal_uS11"/>
</dbReference>
<dbReference type="InterPro" id="IPR019981">
    <property type="entry name" value="Ribosomal_uS11_bac-type"/>
</dbReference>
<dbReference type="InterPro" id="IPR018102">
    <property type="entry name" value="Ribosomal_uS11_CS"/>
</dbReference>
<dbReference type="InterPro" id="IPR036967">
    <property type="entry name" value="Ribosomal_uS11_sf"/>
</dbReference>
<dbReference type="NCBIfam" id="NF003698">
    <property type="entry name" value="PRK05309.1"/>
    <property type="match status" value="1"/>
</dbReference>
<dbReference type="NCBIfam" id="TIGR03632">
    <property type="entry name" value="uS11_bact"/>
    <property type="match status" value="1"/>
</dbReference>
<dbReference type="PANTHER" id="PTHR11759">
    <property type="entry name" value="40S RIBOSOMAL PROTEIN S14/30S RIBOSOMAL PROTEIN S11"/>
    <property type="match status" value="1"/>
</dbReference>
<dbReference type="Pfam" id="PF00411">
    <property type="entry name" value="Ribosomal_S11"/>
    <property type="match status" value="1"/>
</dbReference>
<dbReference type="PIRSF" id="PIRSF002131">
    <property type="entry name" value="Ribosomal_S11"/>
    <property type="match status" value="1"/>
</dbReference>
<dbReference type="SUPFAM" id="SSF53137">
    <property type="entry name" value="Translational machinery components"/>
    <property type="match status" value="1"/>
</dbReference>
<dbReference type="PROSITE" id="PS00054">
    <property type="entry name" value="RIBOSOMAL_S11"/>
    <property type="match status" value="1"/>
</dbReference>
<reference key="1">
    <citation type="submission" date="2003-06" db="EMBL/GenBank/DDBJ databases">
        <title>The complete genome sequence of Haemophilus ducreyi.</title>
        <authorList>
            <person name="Munson R.S. Jr."/>
            <person name="Ray W.C."/>
            <person name="Mahairas G."/>
            <person name="Sabo P."/>
            <person name="Mungur R."/>
            <person name="Johnson L."/>
            <person name="Nguyen D."/>
            <person name="Wang J."/>
            <person name="Forst C."/>
            <person name="Hood L."/>
        </authorList>
    </citation>
    <scope>NUCLEOTIDE SEQUENCE [LARGE SCALE GENOMIC DNA]</scope>
    <source>
        <strain>35000HP / ATCC 700724</strain>
    </source>
</reference>
<gene>
    <name evidence="1" type="primary">rpsK</name>
    <name type="ordered locus">HD_1953</name>
</gene>
<proteinExistence type="inferred from homology"/>